<organism>
    <name type="scientific">Clostridium botulinum (strain Eklund 17B / Type B)</name>
    <dbReference type="NCBI Taxonomy" id="935198"/>
    <lineage>
        <taxon>Bacteria</taxon>
        <taxon>Bacillati</taxon>
        <taxon>Bacillota</taxon>
        <taxon>Clostridia</taxon>
        <taxon>Eubacteriales</taxon>
        <taxon>Clostridiaceae</taxon>
        <taxon>Clostridium</taxon>
    </lineage>
</organism>
<feature type="chain" id="PRO_1000095203" description="Aspartyl/glutamyl-tRNA(Asn/Gln) amidotransferase subunit B">
    <location>
        <begin position="1"/>
        <end position="476"/>
    </location>
</feature>
<name>GATB_CLOBB</name>
<proteinExistence type="inferred from homology"/>
<comment type="function">
    <text evidence="1">Allows the formation of correctly charged Asn-tRNA(Asn) or Gln-tRNA(Gln) through the transamidation of misacylated Asp-tRNA(Asn) or Glu-tRNA(Gln) in organisms which lack either or both of asparaginyl-tRNA or glutaminyl-tRNA synthetases. The reaction takes place in the presence of glutamine and ATP through an activated phospho-Asp-tRNA(Asn) or phospho-Glu-tRNA(Gln).</text>
</comment>
<comment type="catalytic activity">
    <reaction evidence="1">
        <text>L-glutamyl-tRNA(Gln) + L-glutamine + ATP + H2O = L-glutaminyl-tRNA(Gln) + L-glutamate + ADP + phosphate + H(+)</text>
        <dbReference type="Rhea" id="RHEA:17521"/>
        <dbReference type="Rhea" id="RHEA-COMP:9681"/>
        <dbReference type="Rhea" id="RHEA-COMP:9684"/>
        <dbReference type="ChEBI" id="CHEBI:15377"/>
        <dbReference type="ChEBI" id="CHEBI:15378"/>
        <dbReference type="ChEBI" id="CHEBI:29985"/>
        <dbReference type="ChEBI" id="CHEBI:30616"/>
        <dbReference type="ChEBI" id="CHEBI:43474"/>
        <dbReference type="ChEBI" id="CHEBI:58359"/>
        <dbReference type="ChEBI" id="CHEBI:78520"/>
        <dbReference type="ChEBI" id="CHEBI:78521"/>
        <dbReference type="ChEBI" id="CHEBI:456216"/>
    </reaction>
</comment>
<comment type="catalytic activity">
    <reaction evidence="1">
        <text>L-aspartyl-tRNA(Asn) + L-glutamine + ATP + H2O = L-asparaginyl-tRNA(Asn) + L-glutamate + ADP + phosphate + 2 H(+)</text>
        <dbReference type="Rhea" id="RHEA:14513"/>
        <dbReference type="Rhea" id="RHEA-COMP:9674"/>
        <dbReference type="Rhea" id="RHEA-COMP:9677"/>
        <dbReference type="ChEBI" id="CHEBI:15377"/>
        <dbReference type="ChEBI" id="CHEBI:15378"/>
        <dbReference type="ChEBI" id="CHEBI:29985"/>
        <dbReference type="ChEBI" id="CHEBI:30616"/>
        <dbReference type="ChEBI" id="CHEBI:43474"/>
        <dbReference type="ChEBI" id="CHEBI:58359"/>
        <dbReference type="ChEBI" id="CHEBI:78515"/>
        <dbReference type="ChEBI" id="CHEBI:78516"/>
        <dbReference type="ChEBI" id="CHEBI:456216"/>
    </reaction>
</comment>
<comment type="subunit">
    <text evidence="1">Heterotrimer of A, B and C subunits.</text>
</comment>
<comment type="similarity">
    <text evidence="1">Belongs to the GatB/GatE family. GatB subfamily.</text>
</comment>
<reference key="1">
    <citation type="submission" date="2008-04" db="EMBL/GenBank/DDBJ databases">
        <title>Complete sequence of Clostridium botulinum strain Eklund.</title>
        <authorList>
            <person name="Brinkac L.M."/>
            <person name="Brown J.L."/>
            <person name="Bruce D."/>
            <person name="Detter C."/>
            <person name="Munk C."/>
            <person name="Smith L.A."/>
            <person name="Smith T.J."/>
            <person name="Sutton G."/>
            <person name="Brettin T.S."/>
        </authorList>
    </citation>
    <scope>NUCLEOTIDE SEQUENCE [LARGE SCALE GENOMIC DNA]</scope>
    <source>
        <strain>Eklund 17B / Type B</strain>
    </source>
</reference>
<keyword id="KW-0067">ATP-binding</keyword>
<keyword id="KW-0436">Ligase</keyword>
<keyword id="KW-0547">Nucleotide-binding</keyword>
<keyword id="KW-0648">Protein biosynthesis</keyword>
<evidence type="ECO:0000255" key="1">
    <source>
        <dbReference type="HAMAP-Rule" id="MF_00121"/>
    </source>
</evidence>
<protein>
    <recommendedName>
        <fullName evidence="1">Aspartyl/glutamyl-tRNA(Asn/Gln) amidotransferase subunit B</fullName>
        <shortName evidence="1">Asp/Glu-ADT subunit B</shortName>
        <ecNumber evidence="1">6.3.5.-</ecNumber>
    </recommendedName>
</protein>
<accession>B2TJ00</accession>
<sequence>MEFESVIGLEVHAELLTNTKIYCGCTTEFGGKPNTHVCPVCLGLPGSLPQLNKRVLELGIKAGLALNCKITKVGRMDRKNYFYPDCPKNYQITQDELPICRDGYIDIELESGEVKRIGIERIHIEEDAGKLLHTKRGTLVDFNRAGVPLIEVVSKPDIRTPEEATLYLTKLRSILSSAQISDCKMEEGSLRCDGNISIRERGTEPFGIRSEIKNMNSFKALEKALNYEFDRQVEAVTNGEALSVETRRWDETNNKTIVMRSKEQANDYRYFPEGDLVTLNVSDEWIEEIRKTIPELPYQKADRFVKEYGLPKYDAHVLTLTDAMADYFDECAKLSGDPKAASNWIMGDISRLMKEESTWVEDLKFSPKELAELIEVIKDGTISSAIGKKVLEDMFAEGKSPKTIIDEKGLKQNNDEDAIRQLVNKVLDENPQVIEQYKSGRTRILGFAVGQVMKETKGQANPGIVNKLVTEEVEKR</sequence>
<gene>
    <name evidence="1" type="primary">gatB</name>
    <name type="ordered locus">CLL_A0412</name>
</gene>
<dbReference type="EC" id="6.3.5.-" evidence="1"/>
<dbReference type="EMBL" id="CP001056">
    <property type="protein sequence ID" value="ACD24227.1"/>
    <property type="molecule type" value="Genomic_DNA"/>
</dbReference>
<dbReference type="SMR" id="B2TJ00"/>
<dbReference type="KEGG" id="cbk:CLL_A0412"/>
<dbReference type="PATRIC" id="fig|935198.13.peg.389"/>
<dbReference type="HOGENOM" id="CLU_019240_0_0_9"/>
<dbReference type="Proteomes" id="UP000001195">
    <property type="component" value="Chromosome"/>
</dbReference>
<dbReference type="GO" id="GO:0050566">
    <property type="term" value="F:asparaginyl-tRNA synthase (glutamine-hydrolyzing) activity"/>
    <property type="evidence" value="ECO:0007669"/>
    <property type="project" value="RHEA"/>
</dbReference>
<dbReference type="GO" id="GO:0005524">
    <property type="term" value="F:ATP binding"/>
    <property type="evidence" value="ECO:0007669"/>
    <property type="project" value="UniProtKB-KW"/>
</dbReference>
<dbReference type="GO" id="GO:0050567">
    <property type="term" value="F:glutaminyl-tRNA synthase (glutamine-hydrolyzing) activity"/>
    <property type="evidence" value="ECO:0007669"/>
    <property type="project" value="UniProtKB-UniRule"/>
</dbReference>
<dbReference type="GO" id="GO:0070681">
    <property type="term" value="P:glutaminyl-tRNAGln biosynthesis via transamidation"/>
    <property type="evidence" value="ECO:0007669"/>
    <property type="project" value="TreeGrafter"/>
</dbReference>
<dbReference type="GO" id="GO:0006412">
    <property type="term" value="P:translation"/>
    <property type="evidence" value="ECO:0007669"/>
    <property type="project" value="UniProtKB-UniRule"/>
</dbReference>
<dbReference type="FunFam" id="1.10.10.410:FF:000001">
    <property type="entry name" value="Aspartyl/glutamyl-tRNA(Asn/Gln) amidotransferase subunit B"/>
    <property type="match status" value="1"/>
</dbReference>
<dbReference type="FunFam" id="1.10.150.380:FF:000001">
    <property type="entry name" value="Aspartyl/glutamyl-tRNA(Asn/Gln) amidotransferase subunit B"/>
    <property type="match status" value="1"/>
</dbReference>
<dbReference type="Gene3D" id="1.10.10.410">
    <property type="match status" value="1"/>
</dbReference>
<dbReference type="Gene3D" id="1.10.150.380">
    <property type="entry name" value="GatB domain, N-terminal subdomain"/>
    <property type="match status" value="1"/>
</dbReference>
<dbReference type="HAMAP" id="MF_00121">
    <property type="entry name" value="GatB"/>
    <property type="match status" value="1"/>
</dbReference>
<dbReference type="InterPro" id="IPR017959">
    <property type="entry name" value="Asn/Gln-tRNA_amidoTrfase_suB/E"/>
</dbReference>
<dbReference type="InterPro" id="IPR006075">
    <property type="entry name" value="Asn/Gln-tRNA_Trfase_suB/E_cat"/>
</dbReference>
<dbReference type="InterPro" id="IPR018027">
    <property type="entry name" value="Asn/Gln_amidotransferase"/>
</dbReference>
<dbReference type="InterPro" id="IPR003789">
    <property type="entry name" value="Asn/Gln_tRNA_amidoTrase-B-like"/>
</dbReference>
<dbReference type="InterPro" id="IPR004413">
    <property type="entry name" value="GatB"/>
</dbReference>
<dbReference type="InterPro" id="IPR042114">
    <property type="entry name" value="GatB_C_1"/>
</dbReference>
<dbReference type="InterPro" id="IPR023168">
    <property type="entry name" value="GatB_Yqey_C_2"/>
</dbReference>
<dbReference type="InterPro" id="IPR017958">
    <property type="entry name" value="Gln-tRNA_amidoTrfase_suB_CS"/>
</dbReference>
<dbReference type="InterPro" id="IPR014746">
    <property type="entry name" value="Gln_synth/guanido_kin_cat_dom"/>
</dbReference>
<dbReference type="NCBIfam" id="TIGR00133">
    <property type="entry name" value="gatB"/>
    <property type="match status" value="1"/>
</dbReference>
<dbReference type="NCBIfam" id="NF004012">
    <property type="entry name" value="PRK05477.1-2"/>
    <property type="match status" value="1"/>
</dbReference>
<dbReference type="NCBIfam" id="NF004014">
    <property type="entry name" value="PRK05477.1-4"/>
    <property type="match status" value="1"/>
</dbReference>
<dbReference type="PANTHER" id="PTHR11659">
    <property type="entry name" value="GLUTAMYL-TRNA GLN AMIDOTRANSFERASE SUBUNIT B MITOCHONDRIAL AND PROKARYOTIC PET112-RELATED"/>
    <property type="match status" value="1"/>
</dbReference>
<dbReference type="PANTHER" id="PTHR11659:SF0">
    <property type="entry name" value="GLUTAMYL-TRNA(GLN) AMIDOTRANSFERASE SUBUNIT B, MITOCHONDRIAL"/>
    <property type="match status" value="1"/>
</dbReference>
<dbReference type="Pfam" id="PF02934">
    <property type="entry name" value="GatB_N"/>
    <property type="match status" value="1"/>
</dbReference>
<dbReference type="Pfam" id="PF02637">
    <property type="entry name" value="GatB_Yqey"/>
    <property type="match status" value="1"/>
</dbReference>
<dbReference type="SMART" id="SM00845">
    <property type="entry name" value="GatB_Yqey"/>
    <property type="match status" value="1"/>
</dbReference>
<dbReference type="SUPFAM" id="SSF89095">
    <property type="entry name" value="GatB/YqeY motif"/>
    <property type="match status" value="1"/>
</dbReference>
<dbReference type="SUPFAM" id="SSF55931">
    <property type="entry name" value="Glutamine synthetase/guanido kinase"/>
    <property type="match status" value="1"/>
</dbReference>
<dbReference type="PROSITE" id="PS01234">
    <property type="entry name" value="GATB"/>
    <property type="match status" value="1"/>
</dbReference>